<organism>
    <name type="scientific">Aeromonas salmonicida (strain A449)</name>
    <dbReference type="NCBI Taxonomy" id="382245"/>
    <lineage>
        <taxon>Bacteria</taxon>
        <taxon>Pseudomonadati</taxon>
        <taxon>Pseudomonadota</taxon>
        <taxon>Gammaproteobacteria</taxon>
        <taxon>Aeromonadales</taxon>
        <taxon>Aeromonadaceae</taxon>
        <taxon>Aeromonas</taxon>
    </lineage>
</organism>
<gene>
    <name type="ordered locus">ASA_4229</name>
</gene>
<proteinExistence type="inferred from homology"/>
<comment type="similarity">
    <text evidence="2">Belongs to the UPF0758 family.</text>
</comment>
<comment type="sequence caution" evidence="2">
    <conflict type="erroneous initiation">
        <sequence resource="EMBL-CDS" id="ABO92157"/>
    </conflict>
</comment>
<keyword id="KW-0378">Hydrolase</keyword>
<keyword id="KW-0479">Metal-binding</keyword>
<keyword id="KW-0482">Metalloprotease</keyword>
<keyword id="KW-0645">Protease</keyword>
<keyword id="KW-0862">Zinc</keyword>
<protein>
    <recommendedName>
        <fullName>UPF0758 protein ASA_4229</fullName>
    </recommendedName>
</protein>
<reference key="1">
    <citation type="journal article" date="2008" name="BMC Genomics">
        <title>The genome of Aeromonas salmonicida subsp. salmonicida A449: insights into the evolution of a fish pathogen.</title>
        <authorList>
            <person name="Reith M.E."/>
            <person name="Singh R.K."/>
            <person name="Curtis B."/>
            <person name="Boyd J.M."/>
            <person name="Bouevitch A."/>
            <person name="Kimball J."/>
            <person name="Munholland J."/>
            <person name="Murphy C."/>
            <person name="Sarty D."/>
            <person name="Williams J."/>
            <person name="Nash J.H."/>
            <person name="Johnson S.C."/>
            <person name="Brown L.L."/>
        </authorList>
    </citation>
    <scope>NUCLEOTIDE SEQUENCE [LARGE SCALE GENOMIC DNA]</scope>
    <source>
        <strain>A449</strain>
    </source>
</reference>
<dbReference type="EMBL" id="CP000644">
    <property type="protein sequence ID" value="ABO92157.1"/>
    <property type="status" value="ALT_INIT"/>
    <property type="molecule type" value="Genomic_DNA"/>
</dbReference>
<dbReference type="SMR" id="A4STD5"/>
<dbReference type="STRING" id="29491.GCA_000820065_04488"/>
<dbReference type="KEGG" id="asa:ASA_4229"/>
<dbReference type="eggNOG" id="COG2003">
    <property type="taxonomic scope" value="Bacteria"/>
</dbReference>
<dbReference type="HOGENOM" id="CLU_073529_0_1_6"/>
<dbReference type="Proteomes" id="UP000000225">
    <property type="component" value="Chromosome"/>
</dbReference>
<dbReference type="GO" id="GO:0046872">
    <property type="term" value="F:metal ion binding"/>
    <property type="evidence" value="ECO:0007669"/>
    <property type="project" value="UniProtKB-KW"/>
</dbReference>
<dbReference type="GO" id="GO:0008237">
    <property type="term" value="F:metallopeptidase activity"/>
    <property type="evidence" value="ECO:0007669"/>
    <property type="project" value="UniProtKB-KW"/>
</dbReference>
<dbReference type="GO" id="GO:0006508">
    <property type="term" value="P:proteolysis"/>
    <property type="evidence" value="ECO:0007669"/>
    <property type="project" value="UniProtKB-KW"/>
</dbReference>
<dbReference type="CDD" id="cd08071">
    <property type="entry name" value="MPN_DUF2466"/>
    <property type="match status" value="1"/>
</dbReference>
<dbReference type="Gene3D" id="3.40.140.10">
    <property type="entry name" value="Cytidine Deaminase, domain 2"/>
    <property type="match status" value="1"/>
</dbReference>
<dbReference type="InterPro" id="IPR037518">
    <property type="entry name" value="MPN"/>
</dbReference>
<dbReference type="InterPro" id="IPR025657">
    <property type="entry name" value="RadC_JAB"/>
</dbReference>
<dbReference type="InterPro" id="IPR010994">
    <property type="entry name" value="RuvA_2-like"/>
</dbReference>
<dbReference type="InterPro" id="IPR001405">
    <property type="entry name" value="UPF0758"/>
</dbReference>
<dbReference type="InterPro" id="IPR020891">
    <property type="entry name" value="UPF0758_CS"/>
</dbReference>
<dbReference type="InterPro" id="IPR046778">
    <property type="entry name" value="UPF0758_N"/>
</dbReference>
<dbReference type="NCBIfam" id="NF000642">
    <property type="entry name" value="PRK00024.1"/>
    <property type="match status" value="1"/>
</dbReference>
<dbReference type="NCBIfam" id="TIGR00608">
    <property type="entry name" value="radc"/>
    <property type="match status" value="1"/>
</dbReference>
<dbReference type="PANTHER" id="PTHR30471">
    <property type="entry name" value="DNA REPAIR PROTEIN RADC"/>
    <property type="match status" value="1"/>
</dbReference>
<dbReference type="PANTHER" id="PTHR30471:SF3">
    <property type="entry name" value="UPF0758 PROTEIN YEES-RELATED"/>
    <property type="match status" value="1"/>
</dbReference>
<dbReference type="Pfam" id="PF04002">
    <property type="entry name" value="RadC"/>
    <property type="match status" value="1"/>
</dbReference>
<dbReference type="Pfam" id="PF20582">
    <property type="entry name" value="UPF0758_N"/>
    <property type="match status" value="1"/>
</dbReference>
<dbReference type="SUPFAM" id="SSF102712">
    <property type="entry name" value="JAB1/MPN domain"/>
    <property type="match status" value="1"/>
</dbReference>
<dbReference type="SUPFAM" id="SSF47781">
    <property type="entry name" value="RuvA domain 2-like"/>
    <property type="match status" value="1"/>
</dbReference>
<dbReference type="PROSITE" id="PS50249">
    <property type="entry name" value="MPN"/>
    <property type="match status" value="1"/>
</dbReference>
<dbReference type="PROSITE" id="PS01302">
    <property type="entry name" value="UPF0758"/>
    <property type="match status" value="1"/>
</dbReference>
<name>Y4229_AERS4</name>
<feature type="chain" id="PRO_0000322662" description="UPF0758 protein ASA_4229">
    <location>
        <begin position="1"/>
        <end position="220"/>
    </location>
</feature>
<feature type="domain" description="MPN" evidence="1">
    <location>
        <begin position="95"/>
        <end position="220"/>
    </location>
</feature>
<feature type="short sequence motif" description="JAMM motif" evidence="1">
    <location>
        <begin position="169"/>
        <end position="182"/>
    </location>
</feature>
<feature type="binding site" evidence="1">
    <location>
        <position position="169"/>
    </location>
    <ligand>
        <name>Zn(2+)</name>
        <dbReference type="ChEBI" id="CHEBI:29105"/>
        <note>catalytic</note>
    </ligand>
</feature>
<feature type="binding site" evidence="1">
    <location>
        <position position="171"/>
    </location>
    <ligand>
        <name>Zn(2+)</name>
        <dbReference type="ChEBI" id="CHEBI:29105"/>
        <note>catalytic</note>
    </ligand>
</feature>
<feature type="binding site" evidence="1">
    <location>
        <position position="182"/>
    </location>
    <ligand>
        <name>Zn(2+)</name>
        <dbReference type="ChEBI" id="CHEBI:29105"/>
        <note>catalytic</note>
    </ligand>
</feature>
<sequence length="220" mass="24345">MSIKEWPEDERPREKLLRQGPATLSDAELLAIFLRTGVNGLSAVDLSRQLLQQFGSLRALLGADQGAFCHAHGLGPAKYAQLQAVLEMGKRHLAEQLQRGDALTSPQLTRDYLQAQLREVFALLLLDNQHRVIQFVELFYGTLDSASVWPREIVQIALKHNAAAVILAHNHPSGVAEPSRADRQITDRILAALALIDIRVLDHLVIGDGITVSFAERGWL</sequence>
<evidence type="ECO:0000255" key="1">
    <source>
        <dbReference type="PROSITE-ProRule" id="PRU01182"/>
    </source>
</evidence>
<evidence type="ECO:0000305" key="2"/>
<accession>A4STD5</accession>